<protein>
    <recommendedName>
        <fullName evidence="1">Small ribosomal subunit protein eS28</fullName>
    </recommendedName>
    <alternativeName>
        <fullName evidence="2">30S ribosomal protein S28e</fullName>
    </alternativeName>
</protein>
<accession>Q8TVE7</accession>
<feature type="chain" id="PRO_0000136849" description="Small ribosomal subunit protein eS28">
    <location>
        <begin position="1"/>
        <end position="74"/>
    </location>
</feature>
<dbReference type="EMBL" id="AE009439">
    <property type="protein sequence ID" value="AAM02658.1"/>
    <property type="molecule type" value="Genomic_DNA"/>
</dbReference>
<dbReference type="SMR" id="Q8TVE7"/>
<dbReference type="FunCoup" id="Q8TVE7">
    <property type="interactions" value="138"/>
</dbReference>
<dbReference type="STRING" id="190192.MK1445"/>
<dbReference type="PaxDb" id="190192-MK1445"/>
<dbReference type="EnsemblBacteria" id="AAM02658">
    <property type="protein sequence ID" value="AAM02658"/>
    <property type="gene ID" value="MK1445"/>
</dbReference>
<dbReference type="KEGG" id="mka:MK1445"/>
<dbReference type="PATRIC" id="fig|190192.8.peg.1601"/>
<dbReference type="HOGENOM" id="CLU_178987_2_1_2"/>
<dbReference type="InParanoid" id="Q8TVE7"/>
<dbReference type="OrthoDB" id="7620at2157"/>
<dbReference type="Proteomes" id="UP000001826">
    <property type="component" value="Chromosome"/>
</dbReference>
<dbReference type="GO" id="GO:0022627">
    <property type="term" value="C:cytosolic small ribosomal subunit"/>
    <property type="evidence" value="ECO:0007669"/>
    <property type="project" value="TreeGrafter"/>
</dbReference>
<dbReference type="GO" id="GO:0003735">
    <property type="term" value="F:structural constituent of ribosome"/>
    <property type="evidence" value="ECO:0007669"/>
    <property type="project" value="InterPro"/>
</dbReference>
<dbReference type="GO" id="GO:0030490">
    <property type="term" value="P:maturation of SSU-rRNA"/>
    <property type="evidence" value="ECO:0007669"/>
    <property type="project" value="TreeGrafter"/>
</dbReference>
<dbReference type="GO" id="GO:0000028">
    <property type="term" value="P:ribosomal small subunit assembly"/>
    <property type="evidence" value="ECO:0007669"/>
    <property type="project" value="TreeGrafter"/>
</dbReference>
<dbReference type="GO" id="GO:0006412">
    <property type="term" value="P:translation"/>
    <property type="evidence" value="ECO:0007669"/>
    <property type="project" value="UniProtKB-UniRule"/>
</dbReference>
<dbReference type="CDD" id="cd04457">
    <property type="entry name" value="S1_S28E"/>
    <property type="match status" value="1"/>
</dbReference>
<dbReference type="FunFam" id="2.40.50.140:FF:000145">
    <property type="entry name" value="30S ribosomal protein S28e"/>
    <property type="match status" value="1"/>
</dbReference>
<dbReference type="Gene3D" id="2.40.50.140">
    <property type="entry name" value="Nucleic acid-binding proteins"/>
    <property type="match status" value="1"/>
</dbReference>
<dbReference type="HAMAP" id="MF_00292">
    <property type="entry name" value="Ribosomal_eS28"/>
    <property type="match status" value="1"/>
</dbReference>
<dbReference type="InterPro" id="IPR012340">
    <property type="entry name" value="NA-bd_OB-fold"/>
</dbReference>
<dbReference type="InterPro" id="IPR000289">
    <property type="entry name" value="Ribosomal_eS28"/>
</dbReference>
<dbReference type="InterPro" id="IPR028626">
    <property type="entry name" value="Ribosomal_eS28_CS"/>
</dbReference>
<dbReference type="NCBIfam" id="NF003080">
    <property type="entry name" value="PRK04007.1"/>
    <property type="match status" value="1"/>
</dbReference>
<dbReference type="PANTHER" id="PTHR10769">
    <property type="entry name" value="40S RIBOSOMAL PROTEIN S28"/>
    <property type="match status" value="1"/>
</dbReference>
<dbReference type="PANTHER" id="PTHR10769:SF3">
    <property type="entry name" value="SMALL RIBOSOMAL SUBUNIT PROTEIN ES28"/>
    <property type="match status" value="1"/>
</dbReference>
<dbReference type="Pfam" id="PF01200">
    <property type="entry name" value="Ribosomal_S28e"/>
    <property type="match status" value="1"/>
</dbReference>
<dbReference type="SUPFAM" id="SSF50249">
    <property type="entry name" value="Nucleic acid-binding proteins"/>
    <property type="match status" value="1"/>
</dbReference>
<dbReference type="PROSITE" id="PS00961">
    <property type="entry name" value="RIBOSOMAL_S28E"/>
    <property type="match status" value="1"/>
</dbReference>
<reference key="1">
    <citation type="journal article" date="2002" name="Proc. Natl. Acad. Sci. U.S.A.">
        <title>The complete genome of hyperthermophile Methanopyrus kandleri AV19 and monophyly of archaeal methanogens.</title>
        <authorList>
            <person name="Slesarev A.I."/>
            <person name="Mezhevaya K.V."/>
            <person name="Makarova K.S."/>
            <person name="Polushin N.N."/>
            <person name="Shcherbinina O.V."/>
            <person name="Shakhova V.V."/>
            <person name="Belova G.I."/>
            <person name="Aravind L."/>
            <person name="Natale D.A."/>
            <person name="Rogozin I.B."/>
            <person name="Tatusov R.L."/>
            <person name="Wolf Y.I."/>
            <person name="Stetter K.O."/>
            <person name="Malykh A.G."/>
            <person name="Koonin E.V."/>
            <person name="Kozyavkin S.A."/>
        </authorList>
    </citation>
    <scope>NUCLEOTIDE SEQUENCE [LARGE SCALE GENOMIC DNA]</scope>
    <source>
        <strain>AV19 / DSM 6324 / JCM 9639 / NBRC 100938</strain>
    </source>
</reference>
<keyword id="KW-1185">Reference proteome</keyword>
<keyword id="KW-0687">Ribonucleoprotein</keyword>
<keyword id="KW-0689">Ribosomal protein</keyword>
<evidence type="ECO:0000255" key="1">
    <source>
        <dbReference type="HAMAP-Rule" id="MF_00292"/>
    </source>
</evidence>
<evidence type="ECO:0000305" key="2"/>
<name>RS28_METKA</name>
<comment type="similarity">
    <text evidence="1">Belongs to the eukaryotic ribosomal protein eS28 family.</text>
</comment>
<organism>
    <name type="scientific">Methanopyrus kandleri (strain AV19 / DSM 6324 / JCM 9639 / NBRC 100938)</name>
    <dbReference type="NCBI Taxonomy" id="190192"/>
    <lineage>
        <taxon>Archaea</taxon>
        <taxon>Methanobacteriati</taxon>
        <taxon>Methanobacteriota</taxon>
        <taxon>Methanomada group</taxon>
        <taxon>Methanopyri</taxon>
        <taxon>Methanopyrales</taxon>
        <taxon>Methanopyraceae</taxon>
        <taxon>Methanopyrus</taxon>
    </lineage>
</organism>
<sequence length="74" mass="8232">MVECDYDPTEDATPAEVVEILGRTGMAGEVTQVKVRILEGPDKGRIITRNVKGPVREGDILLLRETEREARPIE</sequence>
<gene>
    <name evidence="1" type="primary">rps28e</name>
    <name type="ordered locus">MK1445</name>
</gene>
<proteinExistence type="inferred from homology"/>